<name>TRHO_FRATM</name>
<feature type="chain" id="PRO_1000200362" description="tRNA uridine(34) hydroxylase">
    <location>
        <begin position="1"/>
        <end position="328"/>
    </location>
</feature>
<feature type="domain" description="Rhodanese" evidence="1">
    <location>
        <begin position="123"/>
        <end position="217"/>
    </location>
</feature>
<feature type="region of interest" description="Disordered" evidence="2">
    <location>
        <begin position="304"/>
        <end position="328"/>
    </location>
</feature>
<feature type="compositionally biased region" description="Basic and acidic residues" evidence="2">
    <location>
        <begin position="317"/>
        <end position="328"/>
    </location>
</feature>
<feature type="active site" description="Cysteine persulfide intermediate" evidence="1">
    <location>
        <position position="177"/>
    </location>
</feature>
<comment type="function">
    <text evidence="1">Catalyzes oxygen-dependent 5-hydroxyuridine (ho5U) modification at position 34 in tRNAs.</text>
</comment>
<comment type="catalytic activity">
    <reaction evidence="1">
        <text>uridine(34) in tRNA + AH2 + O2 = 5-hydroxyuridine(34) in tRNA + A + H2O</text>
        <dbReference type="Rhea" id="RHEA:64224"/>
        <dbReference type="Rhea" id="RHEA-COMP:11727"/>
        <dbReference type="Rhea" id="RHEA-COMP:13381"/>
        <dbReference type="ChEBI" id="CHEBI:13193"/>
        <dbReference type="ChEBI" id="CHEBI:15377"/>
        <dbReference type="ChEBI" id="CHEBI:15379"/>
        <dbReference type="ChEBI" id="CHEBI:17499"/>
        <dbReference type="ChEBI" id="CHEBI:65315"/>
        <dbReference type="ChEBI" id="CHEBI:136877"/>
    </reaction>
</comment>
<comment type="similarity">
    <text evidence="1">Belongs to the TrhO family.</text>
</comment>
<evidence type="ECO:0000255" key="1">
    <source>
        <dbReference type="HAMAP-Rule" id="MF_00469"/>
    </source>
</evidence>
<evidence type="ECO:0000256" key="2">
    <source>
        <dbReference type="SAM" id="MobiDB-lite"/>
    </source>
</evidence>
<sequence length="328" mass="37761">MSQIVVCAMYKFVTLEDFEAMRQPLLDTMIKNNVKGTLLLANEGINGTVAGTRESIDNLLAYLKADPRLVDIDYKESYHQEMPFYRSKVKLKKEIVTLGIDEIDPNKICGKYVEPKDWNDLISDPETVLIDTRNEYEIEIGTFKNAINPHTENFREFPQYVDENLDPKKHKKVAMFCTGGIRCEKSTALLKAKGFDEVYHLKGGILKYLEEVPKEKSMWQGECFVFDSRVAVNHDLEKGNYDQCFACRMPITEDDKKRPEYVKGISCHHCYDKVTEKQKARFAEREKQSQLAAEKGFSHVGDEAKKLAQLNKQKKQQAKEAARKKAQQ</sequence>
<proteinExistence type="inferred from homology"/>
<organism>
    <name type="scientific">Francisella tularensis subsp. mediasiatica (strain FSC147)</name>
    <dbReference type="NCBI Taxonomy" id="441952"/>
    <lineage>
        <taxon>Bacteria</taxon>
        <taxon>Pseudomonadati</taxon>
        <taxon>Pseudomonadota</taxon>
        <taxon>Gammaproteobacteria</taxon>
        <taxon>Thiotrichales</taxon>
        <taxon>Francisellaceae</taxon>
        <taxon>Francisella</taxon>
    </lineage>
</organism>
<dbReference type="EC" id="1.14.-.-" evidence="1"/>
<dbReference type="EMBL" id="CP000915">
    <property type="protein sequence ID" value="ACD31098.1"/>
    <property type="molecule type" value="Genomic_DNA"/>
</dbReference>
<dbReference type="SMR" id="B2SH90"/>
<dbReference type="KEGG" id="ftm:FTM_1229"/>
<dbReference type="HOGENOM" id="CLU_038878_0_0_6"/>
<dbReference type="GO" id="GO:0016705">
    <property type="term" value="F:oxidoreductase activity, acting on paired donors, with incorporation or reduction of molecular oxygen"/>
    <property type="evidence" value="ECO:0007669"/>
    <property type="project" value="UniProtKB-UniRule"/>
</dbReference>
<dbReference type="GO" id="GO:0006400">
    <property type="term" value="P:tRNA modification"/>
    <property type="evidence" value="ECO:0007669"/>
    <property type="project" value="UniProtKB-UniRule"/>
</dbReference>
<dbReference type="CDD" id="cd01518">
    <property type="entry name" value="RHOD_YceA"/>
    <property type="match status" value="1"/>
</dbReference>
<dbReference type="Gene3D" id="3.30.70.100">
    <property type="match status" value="1"/>
</dbReference>
<dbReference type="Gene3D" id="3.40.250.10">
    <property type="entry name" value="Rhodanese-like domain"/>
    <property type="match status" value="1"/>
</dbReference>
<dbReference type="HAMAP" id="MF_00469">
    <property type="entry name" value="TrhO"/>
    <property type="match status" value="1"/>
</dbReference>
<dbReference type="InterPro" id="IPR001763">
    <property type="entry name" value="Rhodanese-like_dom"/>
</dbReference>
<dbReference type="InterPro" id="IPR036873">
    <property type="entry name" value="Rhodanese-like_dom_sf"/>
</dbReference>
<dbReference type="InterPro" id="IPR020936">
    <property type="entry name" value="TrhO"/>
</dbReference>
<dbReference type="InterPro" id="IPR040503">
    <property type="entry name" value="TRHO_N"/>
</dbReference>
<dbReference type="NCBIfam" id="NF001136">
    <property type="entry name" value="PRK00142.1-4"/>
    <property type="match status" value="1"/>
</dbReference>
<dbReference type="PANTHER" id="PTHR43268:SF3">
    <property type="entry name" value="RHODANESE-LIKE DOMAIN-CONTAINING PROTEIN 7-RELATED"/>
    <property type="match status" value="1"/>
</dbReference>
<dbReference type="PANTHER" id="PTHR43268">
    <property type="entry name" value="THIOSULFATE SULFURTRANSFERASE/RHODANESE-LIKE DOMAIN-CONTAINING PROTEIN 2"/>
    <property type="match status" value="1"/>
</dbReference>
<dbReference type="Pfam" id="PF00581">
    <property type="entry name" value="Rhodanese"/>
    <property type="match status" value="1"/>
</dbReference>
<dbReference type="Pfam" id="PF17773">
    <property type="entry name" value="UPF0176_N"/>
    <property type="match status" value="1"/>
</dbReference>
<dbReference type="SMART" id="SM00450">
    <property type="entry name" value="RHOD"/>
    <property type="match status" value="1"/>
</dbReference>
<dbReference type="SUPFAM" id="SSF52821">
    <property type="entry name" value="Rhodanese/Cell cycle control phosphatase"/>
    <property type="match status" value="1"/>
</dbReference>
<dbReference type="PROSITE" id="PS50206">
    <property type="entry name" value="RHODANESE_3"/>
    <property type="match status" value="1"/>
</dbReference>
<keyword id="KW-0560">Oxidoreductase</keyword>
<keyword id="KW-0819">tRNA processing</keyword>
<gene>
    <name evidence="1" type="primary">trhO</name>
    <name type="ordered locus">FTM_1229</name>
</gene>
<protein>
    <recommendedName>
        <fullName evidence="1">tRNA uridine(34) hydroxylase</fullName>
        <ecNumber evidence="1">1.14.-.-</ecNumber>
    </recommendedName>
    <alternativeName>
        <fullName evidence="1">tRNA hydroxylation protein O</fullName>
    </alternativeName>
</protein>
<accession>B2SH90</accession>
<reference key="1">
    <citation type="journal article" date="2009" name="PLoS Pathog.">
        <title>Molecular evolutionary consequences of niche restriction in Francisella tularensis, a facultative intracellular pathogen.</title>
        <authorList>
            <person name="Larsson P."/>
            <person name="Elfsmark D."/>
            <person name="Svensson K."/>
            <person name="Wikstroem P."/>
            <person name="Forsman M."/>
            <person name="Brettin T."/>
            <person name="Keim P."/>
            <person name="Johansson A."/>
        </authorList>
    </citation>
    <scope>NUCLEOTIDE SEQUENCE [LARGE SCALE GENOMIC DNA]</scope>
    <source>
        <strain>FSC147</strain>
    </source>
</reference>